<evidence type="ECO:0000255" key="1">
    <source>
        <dbReference type="HAMAP-Rule" id="MF_00222"/>
    </source>
</evidence>
<comment type="function">
    <text evidence="1">Involved in the biosynthesis of the chorismate, which leads to the biosynthesis of aromatic amino acids. Catalyzes the reversible NADPH linked reduction of 3-dehydroshikimate (DHSA) to yield shikimate (SA).</text>
</comment>
<comment type="catalytic activity">
    <reaction evidence="1">
        <text>shikimate + NADP(+) = 3-dehydroshikimate + NADPH + H(+)</text>
        <dbReference type="Rhea" id="RHEA:17737"/>
        <dbReference type="ChEBI" id="CHEBI:15378"/>
        <dbReference type="ChEBI" id="CHEBI:16630"/>
        <dbReference type="ChEBI" id="CHEBI:36208"/>
        <dbReference type="ChEBI" id="CHEBI:57783"/>
        <dbReference type="ChEBI" id="CHEBI:58349"/>
        <dbReference type="EC" id="1.1.1.25"/>
    </reaction>
</comment>
<comment type="pathway">
    <text evidence="1">Metabolic intermediate biosynthesis; chorismate biosynthesis; chorismate from D-erythrose 4-phosphate and phosphoenolpyruvate: step 4/7.</text>
</comment>
<comment type="subunit">
    <text evidence="1">Homodimer.</text>
</comment>
<comment type="similarity">
    <text evidence="1">Belongs to the shikimate dehydrogenase family.</text>
</comment>
<keyword id="KW-0028">Amino-acid biosynthesis</keyword>
<keyword id="KW-0057">Aromatic amino acid biosynthesis</keyword>
<keyword id="KW-0521">NADP</keyword>
<keyword id="KW-0560">Oxidoreductase</keyword>
<keyword id="KW-1185">Reference proteome</keyword>
<reference key="1">
    <citation type="journal article" date="2006" name="Nat. Biotechnol.">
        <title>Complete genome of the mutualistic, N2-fixing grass endophyte Azoarcus sp. strain BH72.</title>
        <authorList>
            <person name="Krause A."/>
            <person name="Ramakumar A."/>
            <person name="Bartels D."/>
            <person name="Battistoni F."/>
            <person name="Bekel T."/>
            <person name="Boch J."/>
            <person name="Boehm M."/>
            <person name="Friedrich F."/>
            <person name="Hurek T."/>
            <person name="Krause L."/>
            <person name="Linke B."/>
            <person name="McHardy A.C."/>
            <person name="Sarkar A."/>
            <person name="Schneiker S."/>
            <person name="Syed A.A."/>
            <person name="Thauer R."/>
            <person name="Vorhoelter F.-J."/>
            <person name="Weidner S."/>
            <person name="Puehler A."/>
            <person name="Reinhold-Hurek B."/>
            <person name="Kaiser O."/>
            <person name="Goesmann A."/>
        </authorList>
    </citation>
    <scope>NUCLEOTIDE SEQUENCE [LARGE SCALE GENOMIC DNA]</scope>
    <source>
        <strain>BH72</strain>
    </source>
</reference>
<feature type="chain" id="PRO_1000021256" description="Shikimate dehydrogenase (NADP(+))">
    <location>
        <begin position="1"/>
        <end position="281"/>
    </location>
</feature>
<feature type="active site" description="Proton acceptor" evidence="1">
    <location>
        <position position="65"/>
    </location>
</feature>
<feature type="binding site" evidence="1">
    <location>
        <begin position="14"/>
        <end position="16"/>
    </location>
    <ligand>
        <name>shikimate</name>
        <dbReference type="ChEBI" id="CHEBI:36208"/>
    </ligand>
</feature>
<feature type="binding site" evidence="1">
    <location>
        <position position="61"/>
    </location>
    <ligand>
        <name>shikimate</name>
        <dbReference type="ChEBI" id="CHEBI:36208"/>
    </ligand>
</feature>
<feature type="binding site" evidence="1">
    <location>
        <position position="86"/>
    </location>
    <ligand>
        <name>shikimate</name>
        <dbReference type="ChEBI" id="CHEBI:36208"/>
    </ligand>
</feature>
<feature type="binding site" evidence="1">
    <location>
        <position position="105"/>
    </location>
    <ligand>
        <name>shikimate</name>
        <dbReference type="ChEBI" id="CHEBI:36208"/>
    </ligand>
</feature>
<feature type="binding site" evidence="1">
    <location>
        <begin position="130"/>
        <end position="134"/>
    </location>
    <ligand>
        <name>NADP(+)</name>
        <dbReference type="ChEBI" id="CHEBI:58349"/>
    </ligand>
</feature>
<feature type="binding site" evidence="1">
    <location>
        <begin position="154"/>
        <end position="159"/>
    </location>
    <ligand>
        <name>NADP(+)</name>
        <dbReference type="ChEBI" id="CHEBI:58349"/>
    </ligand>
</feature>
<feature type="binding site" evidence="1">
    <location>
        <position position="221"/>
    </location>
    <ligand>
        <name>NADP(+)</name>
        <dbReference type="ChEBI" id="CHEBI:58349"/>
    </ligand>
</feature>
<feature type="binding site" evidence="1">
    <location>
        <position position="223"/>
    </location>
    <ligand>
        <name>shikimate</name>
        <dbReference type="ChEBI" id="CHEBI:36208"/>
    </ligand>
</feature>
<feature type="binding site" evidence="1">
    <location>
        <position position="245"/>
    </location>
    <ligand>
        <name>NADP(+)</name>
        <dbReference type="ChEBI" id="CHEBI:58349"/>
    </ligand>
</feature>
<organism>
    <name type="scientific">Azoarcus sp. (strain BH72)</name>
    <dbReference type="NCBI Taxonomy" id="418699"/>
    <lineage>
        <taxon>Bacteria</taxon>
        <taxon>Pseudomonadati</taxon>
        <taxon>Pseudomonadota</taxon>
        <taxon>Betaproteobacteria</taxon>
        <taxon>Rhodocyclales</taxon>
        <taxon>Zoogloeaceae</taxon>
        <taxon>Azoarcus</taxon>
    </lineage>
</organism>
<dbReference type="EC" id="1.1.1.25" evidence="1"/>
<dbReference type="EMBL" id="AM406670">
    <property type="protein sequence ID" value="CAL93324.1"/>
    <property type="molecule type" value="Genomic_DNA"/>
</dbReference>
<dbReference type="RefSeq" id="WP_011764442.1">
    <property type="nucleotide sequence ID" value="NC_008702.1"/>
</dbReference>
<dbReference type="SMR" id="A1K3B9"/>
<dbReference type="STRING" id="62928.azo0707"/>
<dbReference type="KEGG" id="azo:azo0707"/>
<dbReference type="eggNOG" id="COG0169">
    <property type="taxonomic scope" value="Bacteria"/>
</dbReference>
<dbReference type="HOGENOM" id="CLU_044063_2_1_4"/>
<dbReference type="UniPathway" id="UPA00053">
    <property type="reaction ID" value="UER00087"/>
</dbReference>
<dbReference type="Proteomes" id="UP000002588">
    <property type="component" value="Chromosome"/>
</dbReference>
<dbReference type="GO" id="GO:0005829">
    <property type="term" value="C:cytosol"/>
    <property type="evidence" value="ECO:0007669"/>
    <property type="project" value="TreeGrafter"/>
</dbReference>
<dbReference type="GO" id="GO:0050661">
    <property type="term" value="F:NADP binding"/>
    <property type="evidence" value="ECO:0007669"/>
    <property type="project" value="InterPro"/>
</dbReference>
<dbReference type="GO" id="GO:0004764">
    <property type="term" value="F:shikimate 3-dehydrogenase (NADP+) activity"/>
    <property type="evidence" value="ECO:0007669"/>
    <property type="project" value="UniProtKB-UniRule"/>
</dbReference>
<dbReference type="GO" id="GO:0008652">
    <property type="term" value="P:amino acid biosynthetic process"/>
    <property type="evidence" value="ECO:0007669"/>
    <property type="project" value="UniProtKB-KW"/>
</dbReference>
<dbReference type="GO" id="GO:0009073">
    <property type="term" value="P:aromatic amino acid family biosynthetic process"/>
    <property type="evidence" value="ECO:0007669"/>
    <property type="project" value="UniProtKB-KW"/>
</dbReference>
<dbReference type="GO" id="GO:0009423">
    <property type="term" value="P:chorismate biosynthetic process"/>
    <property type="evidence" value="ECO:0007669"/>
    <property type="project" value="UniProtKB-UniRule"/>
</dbReference>
<dbReference type="GO" id="GO:0019632">
    <property type="term" value="P:shikimate metabolic process"/>
    <property type="evidence" value="ECO:0007669"/>
    <property type="project" value="InterPro"/>
</dbReference>
<dbReference type="FunFam" id="3.40.50.10860:FF:000006">
    <property type="entry name" value="Shikimate dehydrogenase (NADP(+))"/>
    <property type="match status" value="1"/>
</dbReference>
<dbReference type="Gene3D" id="3.40.50.10860">
    <property type="entry name" value="Leucine Dehydrogenase, chain A, domain 1"/>
    <property type="match status" value="1"/>
</dbReference>
<dbReference type="Gene3D" id="3.40.50.720">
    <property type="entry name" value="NAD(P)-binding Rossmann-like Domain"/>
    <property type="match status" value="1"/>
</dbReference>
<dbReference type="HAMAP" id="MF_00222">
    <property type="entry name" value="Shikimate_DH_AroE"/>
    <property type="match status" value="1"/>
</dbReference>
<dbReference type="InterPro" id="IPR046346">
    <property type="entry name" value="Aminoacid_DH-like_N_sf"/>
</dbReference>
<dbReference type="InterPro" id="IPR036291">
    <property type="entry name" value="NAD(P)-bd_dom_sf"/>
</dbReference>
<dbReference type="InterPro" id="IPR041121">
    <property type="entry name" value="SDH_C"/>
</dbReference>
<dbReference type="InterPro" id="IPR011342">
    <property type="entry name" value="Shikimate_DH"/>
</dbReference>
<dbReference type="InterPro" id="IPR013708">
    <property type="entry name" value="Shikimate_DH-bd_N"/>
</dbReference>
<dbReference type="InterPro" id="IPR022893">
    <property type="entry name" value="Shikimate_DH_fam"/>
</dbReference>
<dbReference type="InterPro" id="IPR006151">
    <property type="entry name" value="Shikm_DH/Glu-tRNA_Rdtase"/>
</dbReference>
<dbReference type="NCBIfam" id="TIGR00507">
    <property type="entry name" value="aroE"/>
    <property type="match status" value="1"/>
</dbReference>
<dbReference type="NCBIfam" id="NF001310">
    <property type="entry name" value="PRK00258.1-2"/>
    <property type="match status" value="1"/>
</dbReference>
<dbReference type="PANTHER" id="PTHR21089:SF1">
    <property type="entry name" value="BIFUNCTIONAL 3-DEHYDROQUINATE DEHYDRATASE_SHIKIMATE DEHYDROGENASE, CHLOROPLASTIC"/>
    <property type="match status" value="1"/>
</dbReference>
<dbReference type="PANTHER" id="PTHR21089">
    <property type="entry name" value="SHIKIMATE DEHYDROGENASE"/>
    <property type="match status" value="1"/>
</dbReference>
<dbReference type="Pfam" id="PF18317">
    <property type="entry name" value="SDH_C"/>
    <property type="match status" value="1"/>
</dbReference>
<dbReference type="Pfam" id="PF01488">
    <property type="entry name" value="Shikimate_DH"/>
    <property type="match status" value="1"/>
</dbReference>
<dbReference type="Pfam" id="PF08501">
    <property type="entry name" value="Shikimate_dh_N"/>
    <property type="match status" value="1"/>
</dbReference>
<dbReference type="SUPFAM" id="SSF53223">
    <property type="entry name" value="Aminoacid dehydrogenase-like, N-terminal domain"/>
    <property type="match status" value="1"/>
</dbReference>
<dbReference type="SUPFAM" id="SSF51735">
    <property type="entry name" value="NAD(P)-binding Rossmann-fold domains"/>
    <property type="match status" value="1"/>
</dbReference>
<gene>
    <name evidence="1" type="primary">aroE</name>
    <name type="ordered locus">azo0707</name>
</gene>
<accession>A1K3B9</accession>
<name>AROE_AZOSB</name>
<sequence length="281" mass="28497">MDRYAVVGNPIAHSKSPQIHAAFAHQTGEALGYEAILAPLDGFVDTVLAFRAVGGRGMNVTVPFKLEAHALATRLTPRAAAAGAVNTLAFGGPETPDDILGDNTDGAGLVRDLTVNLGCPLHGRRVLLLGAGGAARGALLPLLEQAPAALTIANRTAAKAVELAAGFAAGHPGVAIDGGGFDALAGRRFDVVINATAASLADQAPPLPAGIYAEGALAYDMMYGRGDTPFLAAARADGAGRLADGLGMLVEQAAESFLLWRGVRPDTAPVLADLRARLAAA</sequence>
<protein>
    <recommendedName>
        <fullName evidence="1">Shikimate dehydrogenase (NADP(+))</fullName>
        <shortName evidence="1">SDH</shortName>
        <ecNumber evidence="1">1.1.1.25</ecNumber>
    </recommendedName>
</protein>
<proteinExistence type="inferred from homology"/>